<protein>
    <recommendedName>
        <fullName>RNA1 polyprotein</fullName>
    </recommendedName>
    <alternativeName>
        <fullName>P1</fullName>
    </alternativeName>
    <component>
        <recommendedName>
            <fullName>P1A protein</fullName>
            <shortName>1A</shortName>
        </recommendedName>
        <alternativeName>
            <fullName>Protease cofactor</fullName>
        </alternativeName>
    </component>
    <component>
        <recommendedName>
            <fullName>Putative ATP-dependent helicase</fullName>
            <ecNumber>3.6.4.-</ecNumber>
        </recommendedName>
        <alternativeName>
            <fullName>1B</fullName>
        </alternativeName>
        <alternativeName>
            <fullName>Membrane-binding protein</fullName>
        </alternativeName>
        <alternativeName>
            <fullName>NTP-binding protein</fullName>
            <shortName>NTB</shortName>
        </alternativeName>
    </component>
    <component>
        <recommendedName>
            <fullName>Viral genome-linked protein</fullName>
        </recommendedName>
        <alternativeName>
            <fullName>1C-VPg</fullName>
        </alternativeName>
    </component>
    <component>
        <recommendedName>
            <fullName>Picornain 3C-like protease</fullName>
            <shortName>3C-like protease</shortName>
            <ecNumber>3.4.22.-</ecNumber>
        </recommendedName>
        <alternativeName>
            <fullName>1D-PRO</fullName>
        </alternativeName>
    </component>
    <component>
        <recommendedName>
            <fullName>RNA-directed RNA polymerase</fullName>
            <ecNumber>2.7.7.48</ecNumber>
        </recommendedName>
        <alternativeName>
            <fullName>1E-POL</fullName>
        </alternativeName>
    </component>
</protein>
<comment type="function">
    <text evidence="1">Picornain 3C-like protease is a thiol protease that cleaves the P1 and P2 polyproteins.</text>
</comment>
<comment type="catalytic activity">
    <reaction evidence="3">
        <text>RNA(n) + a ribonucleoside 5'-triphosphate = RNA(n+1) + diphosphate</text>
        <dbReference type="Rhea" id="RHEA:21248"/>
        <dbReference type="Rhea" id="RHEA-COMP:14527"/>
        <dbReference type="Rhea" id="RHEA-COMP:17342"/>
        <dbReference type="ChEBI" id="CHEBI:33019"/>
        <dbReference type="ChEBI" id="CHEBI:61557"/>
        <dbReference type="ChEBI" id="CHEBI:140395"/>
        <dbReference type="EC" id="2.7.7.48"/>
    </reaction>
</comment>
<comment type="subcellular location">
    <molecule>Viral genome-linked protein</molecule>
    <subcellularLocation>
        <location evidence="1">Host endoplasmic reticulum lumen</location>
    </subcellularLocation>
</comment>
<comment type="subcellular location">
    <molecule>Putative ATP-dependent helicase</molecule>
    <subcellularLocation>
        <location evidence="1">Host endoplasmic reticulum membrane</location>
        <topology evidence="1">Single-pass membrane protein</topology>
    </subcellularLocation>
</comment>
<comment type="PTM">
    <text evidence="1">Specific enzymatic cleavages by picornain 3C-like protease in vivo yield mature proteins. Picornain 3C-like protease is autocatalytically processed (By similarity).</text>
</comment>
<comment type="PTM">
    <text evidence="1">VPg is uridylylated by the polymerase and is covalently linked to the 5'-end of genomic RNA. This uridylylated form acts as a nucleotide-peptide primer for the polymerase (By similarity).</text>
</comment>
<comment type="similarity">
    <text evidence="6">Belongs to the nepoviruses RNA1 polyprotein family.</text>
</comment>
<keyword id="KW-0067">ATP-binding</keyword>
<keyword id="KW-0191">Covalent protein-RNA linkage</keyword>
<keyword id="KW-0347">Helicase</keyword>
<keyword id="KW-1038">Host endoplasmic reticulum</keyword>
<keyword id="KW-1043">Host membrane</keyword>
<keyword id="KW-0378">Hydrolase</keyword>
<keyword id="KW-0472">Membrane</keyword>
<keyword id="KW-0547">Nucleotide-binding</keyword>
<keyword id="KW-0548">Nucleotidyltransferase</keyword>
<keyword id="KW-0645">Protease</keyword>
<keyword id="KW-0694">RNA-binding</keyword>
<keyword id="KW-0696">RNA-directed RNA polymerase</keyword>
<keyword id="KW-0788">Thiol protease</keyword>
<keyword id="KW-0808">Transferase</keyword>
<keyword id="KW-0812">Transmembrane</keyword>
<keyword id="KW-1133">Transmembrane helix</keyword>
<keyword id="KW-0693">Viral RNA replication</keyword>
<name>POL1_RRVC</name>
<accession>Q6W8W4</accession>
<feature type="chain" id="PRO_0000037050" description="P1A protein" evidence="2">
    <location>
        <begin position="1"/>
        <end position="586"/>
    </location>
</feature>
<feature type="chain" id="PRO_0000037051" description="Putative ATP-dependent helicase" evidence="2">
    <location>
        <begin position="587"/>
        <end position="1235"/>
    </location>
</feature>
<feature type="chain" id="PRO_0000037052" description="Viral genome-linked protein" evidence="1">
    <location>
        <begin position="1236"/>
        <end position="1259"/>
    </location>
</feature>
<feature type="chain" id="PRO_0000037053" description="Picornain 3C-like protease" evidence="2">
    <location>
        <begin position="1260"/>
        <end position="1472"/>
    </location>
</feature>
<feature type="chain" id="PRO_0000037054" description="RNA-directed RNA polymerase" evidence="2">
    <location>
        <begin position="1473"/>
        <end position="2367"/>
    </location>
</feature>
<feature type="topological domain" description="Cytoplasmic" evidence="2">
    <location>
        <begin position="587"/>
        <end position="1194"/>
    </location>
</feature>
<feature type="transmembrane region" description="Helical" evidence="2">
    <location>
        <begin position="1195"/>
        <end position="1215"/>
    </location>
</feature>
<feature type="topological domain" description="Lumenal" evidence="2">
    <location>
        <begin position="1216"/>
        <end position="1235"/>
    </location>
</feature>
<feature type="domain" description="SF3 helicase" evidence="4">
    <location>
        <begin position="776"/>
        <end position="940"/>
    </location>
</feature>
<feature type="domain" description="Peptidase C3" evidence="5">
    <location>
        <begin position="1258"/>
        <end position="1468"/>
    </location>
</feature>
<feature type="domain" description="RdRp catalytic" evidence="3">
    <location>
        <begin position="1832"/>
        <end position="1957"/>
    </location>
</feature>
<feature type="active site" description="For picornain 3C-like protease activity" evidence="5">
    <location>
        <position position="1302"/>
    </location>
</feature>
<feature type="active site" description="For picornain 3C-like protease activity" evidence="5">
    <location>
        <position position="1339"/>
    </location>
</feature>
<feature type="active site" description="For picornain 3C-like protease activity" evidence="5">
    <location>
        <position position="1432"/>
    </location>
</feature>
<feature type="binding site" evidence="4">
    <location>
        <begin position="804"/>
        <end position="811"/>
    </location>
    <ligand>
        <name>ATP</name>
        <dbReference type="ChEBI" id="CHEBI:30616"/>
    </ligand>
</feature>
<organismHost>
    <name type="scientific">Fragaria vesca</name>
    <name type="common">Woodland strawberry</name>
    <name type="synonym">Potentilla vesca</name>
    <dbReference type="NCBI Taxonomy" id="57918"/>
</organismHost>
<organismHost>
    <name type="scientific">Narcissus pseudonarcissus</name>
    <name type="common">Daffodil</name>
    <dbReference type="NCBI Taxonomy" id="39639"/>
</organismHost>
<organismHost>
    <name type="scientific">Rubus idaeus</name>
    <name type="common">Raspberry</name>
    <dbReference type="NCBI Taxonomy" id="32247"/>
</organismHost>
<sequence>MGWTCPVQGCMYSRSTWSNRGLKEDGLSSTMRCPGAMCGAMLVRSEPVQAPKATVVPQTPVTAVRPKRTVVSATPLRKQDCVVVVEVGFPALLSLEYPALAGRARHTGEFDSALLARKPSNGGTARAPTGWFKPRVVRTQPAKKALPSWVSEARRLIKGALEGSNAFGPRYCREKFPKARLVWVLGMLSKSSPPSVAIGRQLKKSFLALQARIARALAKKQSARAARRQEACRKIRLALQQARGIAALERQQARQLSGAGLYSVRLCTKRALSPIVEVPKRHKKKAISLPSPVSVQEFPEGLVGPNFWETSGLLNCVASPQRREDLVFPVYGIDSCRTDPEYFVVGPKSPSKIMGDTKPRLPTCPAEALNLLWASNLFEDWELDIIGQMVSDGLLTSQAFLDGCTLVSYYGQEQMVDSFHCLLQDPVPAEVAEALAVDVQALDFDAVFGCGISDFLRGTRDAMKGWIMDPVIAKSTTWCNTIIDKVRALFDQYFAPFHKIIDGMSYVNSLWAKCKEWAQSVLKNGSQLFSVMWETHCVSFVIIITCACTLLVENVLKELRLISRVGTLTSCVISGALGILGCGYILAKCEDLAVVSASIRAFLGVLLCPPTMEAVDLNQSLIPEEIQATSWTGVDRVLGALNAVGSGLTGFNTDTIIYWGRFAQSFDGMRRGKDAVCALAACLFEKLGTVYNRVTGKEAAFFHELSSLVSIDVQGWLNSSRRVMAESIAFAKSDAVAFATVERLINDGETIQLTAASAPKSHSMQFGQILAERLRELRTLRNDMAHAGSFEGRRCVPFWLYIYGPPGVGKTTTMHEFSQALLTAFEFPSDSLTSKSATDKYWSLYRRQALVQIDDLGAISESGMEQEMMNIVSSATYNPTMAVANEKTTLFDSKFIVSTSNNYSAGTDAKIHDRKAFNRRRRVVIKTRGKAGVAFNPHDSTAAAEFCVVERDDRAETPIWVQSGEAPDDKELYWMDFRTTVAYVIEQARIHHNAEDIEQAQYSMKHSRTRQLYQVCENYIGEVKMSVANFVPGDMLGAWNLEPKGRFFYSCVDGRVYSYDPEQKAHDEGPVDKALDFEQICLEKLSYTLQADIQGGPKSATAGIFLRSMVSGECAVESVDKLNRSASREHLIFFKNLSLADRVYLRLVQKRILQLAMVGDPLGLRSYTVMMEGFQNSYNYVKENGGRLLLILCSCMLLGIACYTFFNALAILIGGTSVAAGAAAMVDIGACGSTSTYASEYGAKMGRRNMPHRSREIPAVWSEETGHDEKWQLCGLLETCRSDMPAVHVNLVPGNKFAITKHQAQAIPDGSSVGLSVAGRSFRTFQWRASALTEYAESEICTYFDSRIPSLGKQAMKMYSDSDLDALNVKYFSTRTLHFRLVDDQVEKRHWDADACVISTPKTIVSTINGVIYRQEIPTAITYRRESVKHDCGALVFTEVRGKPKAVGMLVGTLGGTTYVCKFPHIEVDAFACVPDIRGFNLEAGVSTLGYSKLGWLDRRHQPHNSEKTEFVPIPEKYHMDDVPCKIPAVLSAKDPRLADIPQCMGYDPYKQGMEKFAHPMQEIDEQLLATVCDEIAQEFHDVGVRGRMVSMDEAINGHHKYEIPSFYVEGASTRELNELRTSCSAEVWCCDPRSDIEFEYPRIIPGPVESKWKCESTCCGCTFKSGGTEAIISFVKARSPCCEEIFFDGLDLTTSEGYPLFLDRPAGAKGKERFFEGSENQKFLIPDCPLDVQLKKGIEETHLGTPQLIIKESAKDELLKEGKVLPSEGMPGTRLFSICPAWYNIVVRQHFVYIAESVRKRRRTLSSQVGIVVGSREWDDLAARLRSKKNDKMYCCDYSKFDGLMTPQIVHAITNIYERMFSGNDGMSQFRQNLLMGICNRISICGSQVYRVEAGMPSGFALTVDFNSIFNEILVRCAYRSLVPEIERPFFSNNVVLIVYGDDNVLGIHPNIESAFNGNAIKAYMKEELGIKITDGADKLSPVICARPLEQCEFLKRTWRKDRQYGLYRAPLVETSIYSCLRYVRLQNYDWQAPLLQNVQGSLYEASLHGPDMHARIYKHFATHFPKWVEEHELYTYEQCRTRFIAAKNGDFNFHPASAQMGHVFSQQTEIQELSQSQNPKRCFQLHPKIHICGPGHNEQDCFYVDVRVKGKITKGKGFHHAPVFSAGSGQLGTVKWASSFRSSSACPMRDLAVDAFKRGECVYFRDNGELINAWLAAINFGMSINADGLDGLLQVYRNQGPTHLDDLSFYFEGGVVGVPAPAHLMVYGTDTSILNRLCPKTVLESAPPPGRSSNVSERSQVQTFLHMSPKPCFITLKGSGKVCHGLRCNNSCRGHISCTDVVRNSAANQRAAMLDVLRRGCYNIQ</sequence>
<proteinExistence type="inferred from homology"/>
<dbReference type="EC" id="3.6.4.-"/>
<dbReference type="EC" id="3.4.22.-"/>
<dbReference type="EC" id="2.7.7.48"/>
<dbReference type="EMBL" id="AY303787">
    <property type="protein sequence ID" value="AAQ73822.1"/>
    <property type="molecule type" value="Genomic_RNA"/>
</dbReference>
<dbReference type="RefSeq" id="NP_944487.1">
    <property type="nucleotide sequence ID" value="NC_005266.1"/>
</dbReference>
<dbReference type="GeneID" id="2943113"/>
<dbReference type="KEGG" id="vg:2943113"/>
<dbReference type="Proteomes" id="UP000007182">
    <property type="component" value="Genome"/>
</dbReference>
<dbReference type="GO" id="GO:0044166">
    <property type="term" value="C:host cell endoplasmic reticulum lumen"/>
    <property type="evidence" value="ECO:0007669"/>
    <property type="project" value="UniProtKB-SubCell"/>
</dbReference>
<dbReference type="GO" id="GO:0044167">
    <property type="term" value="C:host cell endoplasmic reticulum membrane"/>
    <property type="evidence" value="ECO:0007669"/>
    <property type="project" value="UniProtKB-SubCell"/>
</dbReference>
<dbReference type="GO" id="GO:0016020">
    <property type="term" value="C:membrane"/>
    <property type="evidence" value="ECO:0007669"/>
    <property type="project" value="UniProtKB-KW"/>
</dbReference>
<dbReference type="GO" id="GO:0005524">
    <property type="term" value="F:ATP binding"/>
    <property type="evidence" value="ECO:0007669"/>
    <property type="project" value="UniProtKB-KW"/>
</dbReference>
<dbReference type="GO" id="GO:0004197">
    <property type="term" value="F:cysteine-type endopeptidase activity"/>
    <property type="evidence" value="ECO:0007669"/>
    <property type="project" value="InterPro"/>
</dbReference>
<dbReference type="GO" id="GO:0003723">
    <property type="term" value="F:RNA binding"/>
    <property type="evidence" value="ECO:0007669"/>
    <property type="project" value="UniProtKB-KW"/>
</dbReference>
<dbReference type="GO" id="GO:0003724">
    <property type="term" value="F:RNA helicase activity"/>
    <property type="evidence" value="ECO:0007669"/>
    <property type="project" value="InterPro"/>
</dbReference>
<dbReference type="GO" id="GO:0003968">
    <property type="term" value="F:RNA-directed RNA polymerase activity"/>
    <property type="evidence" value="ECO:0007669"/>
    <property type="project" value="UniProtKB-KW"/>
</dbReference>
<dbReference type="GO" id="GO:0006351">
    <property type="term" value="P:DNA-templated transcription"/>
    <property type="evidence" value="ECO:0007669"/>
    <property type="project" value="InterPro"/>
</dbReference>
<dbReference type="GO" id="GO:0006508">
    <property type="term" value="P:proteolysis"/>
    <property type="evidence" value="ECO:0007669"/>
    <property type="project" value="UniProtKB-KW"/>
</dbReference>
<dbReference type="GO" id="GO:0039694">
    <property type="term" value="P:viral RNA genome replication"/>
    <property type="evidence" value="ECO:0007669"/>
    <property type="project" value="InterPro"/>
</dbReference>
<dbReference type="CDD" id="cd00009">
    <property type="entry name" value="AAA"/>
    <property type="match status" value="1"/>
</dbReference>
<dbReference type="Gene3D" id="1.20.960.20">
    <property type="match status" value="1"/>
</dbReference>
<dbReference type="Gene3D" id="3.30.70.270">
    <property type="match status" value="1"/>
</dbReference>
<dbReference type="Gene3D" id="3.40.50.300">
    <property type="entry name" value="P-loop containing nucleotide triphosphate hydrolases"/>
    <property type="match status" value="1"/>
</dbReference>
<dbReference type="InterPro" id="IPR043502">
    <property type="entry name" value="DNA/RNA_pol_sf"/>
</dbReference>
<dbReference type="InterPro" id="IPR004004">
    <property type="entry name" value="Helic/Pol/Pept_Calicivir-typ"/>
</dbReference>
<dbReference type="InterPro" id="IPR000605">
    <property type="entry name" value="Helicase_SF3_ssDNA/RNA_vir"/>
</dbReference>
<dbReference type="InterPro" id="IPR014759">
    <property type="entry name" value="Helicase_SF3_ssRNA_vir"/>
</dbReference>
<dbReference type="InterPro" id="IPR027417">
    <property type="entry name" value="P-loop_NTPase"/>
</dbReference>
<dbReference type="InterPro" id="IPR044067">
    <property type="entry name" value="PCV_3C_PRO"/>
</dbReference>
<dbReference type="InterPro" id="IPR043128">
    <property type="entry name" value="Rev_trsase/Diguanyl_cyclase"/>
</dbReference>
<dbReference type="InterPro" id="IPR001205">
    <property type="entry name" value="RNA-dir_pol_C"/>
</dbReference>
<dbReference type="InterPro" id="IPR007094">
    <property type="entry name" value="RNA-dir_pol_PSvirus"/>
</dbReference>
<dbReference type="Pfam" id="PF00680">
    <property type="entry name" value="RdRP_1"/>
    <property type="match status" value="1"/>
</dbReference>
<dbReference type="Pfam" id="PF00910">
    <property type="entry name" value="RNA_helicase"/>
    <property type="match status" value="1"/>
</dbReference>
<dbReference type="PRINTS" id="PR00918">
    <property type="entry name" value="CALICVIRUSNS"/>
</dbReference>
<dbReference type="SUPFAM" id="SSF56672">
    <property type="entry name" value="DNA/RNA polymerases"/>
    <property type="match status" value="1"/>
</dbReference>
<dbReference type="SUPFAM" id="SSF52540">
    <property type="entry name" value="P-loop containing nucleoside triphosphate hydrolases"/>
    <property type="match status" value="1"/>
</dbReference>
<dbReference type="PROSITE" id="PS51874">
    <property type="entry name" value="PCV_3C_PRO"/>
    <property type="match status" value="1"/>
</dbReference>
<dbReference type="PROSITE" id="PS50507">
    <property type="entry name" value="RDRP_SSRNA_POS"/>
    <property type="match status" value="1"/>
</dbReference>
<dbReference type="PROSITE" id="PS51218">
    <property type="entry name" value="SF3_HELICASE_2"/>
    <property type="match status" value="1"/>
</dbReference>
<evidence type="ECO:0000250" key="1"/>
<evidence type="ECO:0000255" key="2"/>
<evidence type="ECO:0000255" key="3">
    <source>
        <dbReference type="PROSITE-ProRule" id="PRU00539"/>
    </source>
</evidence>
<evidence type="ECO:0000255" key="4">
    <source>
        <dbReference type="PROSITE-ProRule" id="PRU00551"/>
    </source>
</evidence>
<evidence type="ECO:0000255" key="5">
    <source>
        <dbReference type="PROSITE-ProRule" id="PRU01222"/>
    </source>
</evidence>
<evidence type="ECO:0000305" key="6"/>
<organism>
    <name type="scientific">Raspberry ringspot virus (strain cherry)</name>
    <name type="common">RpRSV</name>
    <dbReference type="NCBI Taxonomy" id="281921"/>
    <lineage>
        <taxon>Viruses</taxon>
        <taxon>Riboviria</taxon>
        <taxon>Orthornavirae</taxon>
        <taxon>Pisuviricota</taxon>
        <taxon>Pisoniviricetes</taxon>
        <taxon>Picornavirales</taxon>
        <taxon>Secoviridae</taxon>
        <taxon>Comovirinae</taxon>
        <taxon>Nepovirus</taxon>
        <taxon>Nepovirus rubi</taxon>
    </lineage>
</organism>
<reference key="1">
    <citation type="journal article" date="2003" name="Virus Res.">
        <title>Complete nucleotide sequence of an isolate of the nepovirus raspberry ringspot virus from grapevine.</title>
        <authorList>
            <person name="Ebel R."/>
            <person name="Schnabel A."/>
            <person name="Reustle G.M."/>
            <person name="Krczal G."/>
            <person name="Wetzel T."/>
        </authorList>
    </citation>
    <scope>NUCLEOTIDE SEQUENCE [GENOMIC RNA]</scope>
</reference>